<proteinExistence type="evidence at protein level"/>
<gene>
    <name evidence="19" type="primary">B4GALT1</name>
    <name type="synonym">GGTB2</name>
</gene>
<accession>P15291</accession>
<accession>B2R710</accession>
<accession>D3DRL2</accession>
<accession>Q12909</accession>
<accession>Q12910</accession>
<accession>Q12911</accession>
<accession>Q14456</accession>
<accession>Q14509</accession>
<accession>Q14523</accession>
<protein>
    <recommendedName>
        <fullName evidence="18">Beta-1,4-galactosyltransferase 1</fullName>
        <shortName>Beta-1,4-GalTase 1</shortName>
        <shortName>Beta4Gal-T1</shortName>
        <shortName>b4Gal-T1</shortName>
        <ecNumber evidence="7">2.4.1.-</ecNumber>
    </recommendedName>
    <alternativeName>
        <fullName>Beta-N-acetylglucosaminyl-glycolipid beta-1,4-galactosyltransferase</fullName>
    </alternativeName>
    <alternativeName>
        <fullName>Beta-N-acetylglucosaminylglycopeptide beta-1,4-galactosyltransferase</fullName>
        <ecNumber evidence="7">2.4.1.38</ecNumber>
    </alternativeName>
    <alternativeName>
        <fullName>Lactose synthase A protein</fullName>
        <ecNumber evidence="7">2.4.1.22</ecNumber>
    </alternativeName>
    <alternativeName>
        <fullName>N-acetyllactosamine synthase</fullName>
        <ecNumber evidence="7">2.4.1.90</ecNumber>
    </alternativeName>
    <alternativeName>
        <fullName>Nal synthase</fullName>
    </alternativeName>
    <alternativeName>
        <fullName>Neolactotriaosylceramide beta-1,4-galactosyltransferase</fullName>
        <ecNumber evidence="2">2.4.1.275</ecNumber>
    </alternativeName>
    <alternativeName>
        <fullName>UDP-Gal:beta-GlcNAc beta-1,4-galactosyltransferase 1</fullName>
    </alternativeName>
    <alternativeName>
        <fullName>UDP-galactose:beta-N-acetylglucosamine beta-1,4-galactosyltransferase 1</fullName>
    </alternativeName>
    <component>
        <recommendedName>
            <fullName evidence="18">Processed beta-1,4-galactosyltransferase 1</fullName>
        </recommendedName>
    </component>
</protein>
<evidence type="ECO:0000250" key="1"/>
<evidence type="ECO:0000250" key="2">
    <source>
        <dbReference type="UniProtKB" id="P08037"/>
    </source>
</evidence>
<evidence type="ECO:0000250" key="3">
    <source>
        <dbReference type="UniProtKB" id="P15535"/>
    </source>
</evidence>
<evidence type="ECO:0000255" key="4"/>
<evidence type="ECO:0000256" key="5">
    <source>
        <dbReference type="SAM" id="MobiDB-lite"/>
    </source>
</evidence>
<evidence type="ECO:0000269" key="6">
    <source>
    </source>
</evidence>
<evidence type="ECO:0000269" key="7">
    <source>
    </source>
</evidence>
<evidence type="ECO:0000269" key="8">
    <source>
    </source>
</evidence>
<evidence type="ECO:0000269" key="9">
    <source>
    </source>
</evidence>
<evidence type="ECO:0000269" key="10">
    <source>
    </source>
</evidence>
<evidence type="ECO:0000269" key="11">
    <source>
    </source>
</evidence>
<evidence type="ECO:0000269" key="12">
    <source>
    </source>
</evidence>
<evidence type="ECO:0000269" key="13">
    <source>
    </source>
</evidence>
<evidence type="ECO:0000269" key="14">
    <source>
    </source>
</evidence>
<evidence type="ECO:0000269" key="15">
    <source>
    </source>
</evidence>
<evidence type="ECO:0000269" key="16">
    <source>
    </source>
</evidence>
<evidence type="ECO:0000303" key="17">
    <source>
    </source>
</evidence>
<evidence type="ECO:0000305" key="18"/>
<evidence type="ECO:0000312" key="19">
    <source>
        <dbReference type="HGNC" id="HGNC:924"/>
    </source>
</evidence>
<evidence type="ECO:0007744" key="20">
    <source>
        <dbReference type="PDB" id="2AE7"/>
    </source>
</evidence>
<evidence type="ECO:0007744" key="21">
    <source>
        <dbReference type="PDB" id="2AEC"/>
    </source>
</evidence>
<evidence type="ECO:0007744" key="22">
    <source>
        <dbReference type="PDB" id="2AES"/>
    </source>
</evidence>
<evidence type="ECO:0007744" key="23">
    <source>
        <dbReference type="PDB" id="2AGD"/>
    </source>
</evidence>
<evidence type="ECO:0007744" key="24">
    <source>
        <dbReference type="PDB" id="2AH9"/>
    </source>
</evidence>
<evidence type="ECO:0007744" key="25">
    <source>
        <dbReference type="PDB" id="2FY7"/>
    </source>
</evidence>
<evidence type="ECO:0007744" key="26">
    <source>
        <dbReference type="PDB" id="2FYA"/>
    </source>
</evidence>
<evidence type="ECO:0007744" key="27">
    <source>
        <dbReference type="PDB" id="2FYB"/>
    </source>
</evidence>
<evidence type="ECO:0007744" key="28">
    <source>
        <dbReference type="PDB" id="3EE5"/>
    </source>
</evidence>
<evidence type="ECO:0007744" key="29">
    <source>
        <dbReference type="PDB" id="4EE3"/>
    </source>
</evidence>
<evidence type="ECO:0007744" key="30">
    <source>
        <dbReference type="PDB" id="4EE4"/>
    </source>
</evidence>
<evidence type="ECO:0007744" key="31">
    <source>
        <dbReference type="PDB" id="4EE5"/>
    </source>
</evidence>
<evidence type="ECO:0007744" key="32">
    <source>
        <dbReference type="PDB" id="4EEA"/>
    </source>
</evidence>
<evidence type="ECO:0007744" key="33">
    <source>
        <dbReference type="PDB" id="4EEG"/>
    </source>
</evidence>
<evidence type="ECO:0007744" key="34">
    <source>
        <dbReference type="PDB" id="4EEM"/>
    </source>
</evidence>
<evidence type="ECO:0007744" key="35">
    <source>
        <dbReference type="PDB" id="4EEO"/>
    </source>
</evidence>
<evidence type="ECO:0007744" key="36">
    <source>
        <dbReference type="PDB" id="4L41"/>
    </source>
</evidence>
<evidence type="ECO:0007829" key="37">
    <source>
        <dbReference type="PDB" id="2AGD"/>
    </source>
</evidence>
<evidence type="ECO:0007829" key="38">
    <source>
        <dbReference type="PDB" id="2FY7"/>
    </source>
</evidence>
<evidence type="ECO:0007829" key="39">
    <source>
        <dbReference type="PDB" id="4L41"/>
    </source>
</evidence>
<evidence type="ECO:0007829" key="40">
    <source>
        <dbReference type="PDB" id="6FWT"/>
    </source>
</evidence>
<evidence type="ECO:0007829" key="41">
    <source>
        <dbReference type="PDB" id="6FWU"/>
    </source>
</evidence>
<sequence>MRLREPLLSGSAAMPGASLQRACRLLVAVCALHLGVTLVYYLAGRDLSRLPQLVGVSTPLQGGSNSAAAIGQSSGELRTGGARPPPPLGASSQPRPGGDSSPVVDSGPGPASNLTSVPVPHTTALSLPACPEESPLLVGPMLIEFNMPVDLELVAKQNPNVKMGGRYAPRDCVSPHKVAIIIPFRNRQEHLKYWLYYLHPVLQRQQLDYGIYVINQAGDTIFNRAKLLNVGFQEALKDYDYTCFVFSDVDLIPMNDHNAYRCFSQPRHISVAMDKFGFSLPYVQYFGGVSALSKQQFLTINGFPNNYWGWGGEDDDIFNRLVFRGMSISRPNAVVGRCRMIRHSRDKKNEPNPQRFDRIAHTKETMLSDGLNSLTYQVLDVQRYPLYTQITVDIGTPS</sequence>
<keyword id="KW-0002">3D-structure</keyword>
<keyword id="KW-0024">Alternative initiation</keyword>
<keyword id="KW-1003">Cell membrane</keyword>
<keyword id="KW-0966">Cell projection</keyword>
<keyword id="KW-0900">Congenital disorder of glycosylation</keyword>
<keyword id="KW-0903">Direct protein sequencing</keyword>
<keyword id="KW-0225">Disease variant</keyword>
<keyword id="KW-1015">Disulfide bond</keyword>
<keyword id="KW-0325">Glycoprotein</keyword>
<keyword id="KW-0328">Glycosyltransferase</keyword>
<keyword id="KW-0333">Golgi apparatus</keyword>
<keyword id="KW-0443">Lipid metabolism</keyword>
<keyword id="KW-0464">Manganese</keyword>
<keyword id="KW-0472">Membrane</keyword>
<keyword id="KW-0479">Metal-binding</keyword>
<keyword id="KW-1267">Proteomics identification</keyword>
<keyword id="KW-1185">Reference proteome</keyword>
<keyword id="KW-0964">Secreted</keyword>
<keyword id="KW-0735">Signal-anchor</keyword>
<keyword id="KW-0808">Transferase</keyword>
<keyword id="KW-0812">Transmembrane</keyword>
<keyword id="KW-1133">Transmembrane helix</keyword>
<name>B4GT1_HUMAN</name>
<organism>
    <name type="scientific">Homo sapiens</name>
    <name type="common">Human</name>
    <dbReference type="NCBI Taxonomy" id="9606"/>
    <lineage>
        <taxon>Eukaryota</taxon>
        <taxon>Metazoa</taxon>
        <taxon>Chordata</taxon>
        <taxon>Craniata</taxon>
        <taxon>Vertebrata</taxon>
        <taxon>Euteleostomi</taxon>
        <taxon>Mammalia</taxon>
        <taxon>Eutheria</taxon>
        <taxon>Euarchontoglires</taxon>
        <taxon>Primates</taxon>
        <taxon>Haplorrhini</taxon>
        <taxon>Catarrhini</taxon>
        <taxon>Hominidae</taxon>
        <taxon>Homo</taxon>
    </lineage>
</organism>
<dbReference type="EC" id="2.4.1.-" evidence="7"/>
<dbReference type="EC" id="2.4.1.38" evidence="7"/>
<dbReference type="EC" id="2.4.1.22" evidence="7"/>
<dbReference type="EC" id="2.4.1.90" evidence="7"/>
<dbReference type="EC" id="2.4.1.275" evidence="2"/>
<dbReference type="EMBL" id="X14085">
    <property type="protein sequence ID" value="CAA32247.1"/>
    <property type="molecule type" value="mRNA"/>
</dbReference>
<dbReference type="EMBL" id="M22921">
    <property type="protein sequence ID" value="AAA35936.1"/>
    <property type="molecule type" value="mRNA"/>
</dbReference>
<dbReference type="EMBL" id="M22921">
    <property type="protein sequence ID" value="AAA35937.1"/>
    <property type="molecule type" value="mRNA"/>
</dbReference>
<dbReference type="EMBL" id="X55415">
    <property type="protein sequence ID" value="CAA39073.1"/>
    <property type="molecule type" value="mRNA"/>
</dbReference>
<dbReference type="EMBL" id="X55415">
    <property type="protein sequence ID" value="CAA39074.1"/>
    <property type="molecule type" value="mRNA"/>
</dbReference>
<dbReference type="EMBL" id="M70432">
    <property type="protein sequence ID" value="AAB00776.1"/>
    <property type="molecule type" value="Genomic_DNA"/>
</dbReference>
<dbReference type="EMBL" id="M70427">
    <property type="protein sequence ID" value="AAB00776.1"/>
    <property type="status" value="JOINED"/>
    <property type="molecule type" value="Genomic_DNA"/>
</dbReference>
<dbReference type="EMBL" id="M70428">
    <property type="protein sequence ID" value="AAB00776.1"/>
    <property type="status" value="JOINED"/>
    <property type="molecule type" value="Genomic_DNA"/>
</dbReference>
<dbReference type="EMBL" id="M70429">
    <property type="protein sequence ID" value="AAB00776.1"/>
    <property type="status" value="JOINED"/>
    <property type="molecule type" value="Genomic_DNA"/>
</dbReference>
<dbReference type="EMBL" id="M70430">
    <property type="protein sequence ID" value="AAB00776.1"/>
    <property type="status" value="JOINED"/>
    <property type="molecule type" value="Genomic_DNA"/>
</dbReference>
<dbReference type="EMBL" id="M70431">
    <property type="protein sequence ID" value="AAB00776.1"/>
    <property type="status" value="JOINED"/>
    <property type="molecule type" value="Genomic_DNA"/>
</dbReference>
<dbReference type="EMBL" id="X13223">
    <property type="protein sequence ID" value="CAA31611.1"/>
    <property type="molecule type" value="mRNA"/>
</dbReference>
<dbReference type="EMBL" id="D29805">
    <property type="protein sequence ID" value="BAA06188.1"/>
    <property type="molecule type" value="mRNA"/>
</dbReference>
<dbReference type="EMBL" id="U10472">
    <property type="protein sequence ID" value="AAA68218.1"/>
    <property type="molecule type" value="mRNA"/>
</dbReference>
<dbReference type="EMBL" id="U10473">
    <property type="protein sequence ID" value="AAA68219.1"/>
    <property type="molecule type" value="mRNA"/>
</dbReference>
<dbReference type="EMBL" id="U10474">
    <property type="protein sequence ID" value="AAA68220.1"/>
    <property type="molecule type" value="mRNA"/>
</dbReference>
<dbReference type="EMBL" id="CH471071">
    <property type="protein sequence ID" value="EAW58520.1"/>
    <property type="molecule type" value="Genomic_DNA"/>
</dbReference>
<dbReference type="EMBL" id="CH471071">
    <property type="protein sequence ID" value="EAW58521.1"/>
    <property type="molecule type" value="Genomic_DNA"/>
</dbReference>
<dbReference type="EMBL" id="AK312797">
    <property type="protein sequence ID" value="BAG35657.1"/>
    <property type="molecule type" value="mRNA"/>
</dbReference>
<dbReference type="EMBL" id="AL161445">
    <property type="status" value="NOT_ANNOTATED_CDS"/>
    <property type="molecule type" value="Genomic_DNA"/>
</dbReference>
<dbReference type="EMBL" id="M13701">
    <property type="protein sequence ID" value="AAA35935.1"/>
    <property type="molecule type" value="mRNA"/>
</dbReference>
<dbReference type="CCDS" id="CCDS6535.1">
    <molecule id="P15291-1"/>
</dbReference>
<dbReference type="PIR" id="JQ1030">
    <property type="entry name" value="JQ1030"/>
</dbReference>
<dbReference type="RefSeq" id="NP_001365424.1">
    <molecule id="P15291-2"/>
    <property type="nucleotide sequence ID" value="NM_001378495.1"/>
</dbReference>
<dbReference type="RefSeq" id="NP_001488.2">
    <molecule id="P15291-1"/>
    <property type="nucleotide sequence ID" value="NM_001497.3"/>
</dbReference>
<dbReference type="RefSeq" id="XP_047279187.1">
    <molecule id="P15291-1"/>
    <property type="nucleotide sequence ID" value="XM_047423231.1"/>
</dbReference>
<dbReference type="PDB" id="2AE7">
    <property type="method" value="X-ray"/>
    <property type="resolution" value="2.00 A"/>
    <property type="chains" value="A/B/C=126-398"/>
</dbReference>
<dbReference type="PDB" id="2AEC">
    <property type="method" value="X-ray"/>
    <property type="resolution" value="2.00 A"/>
    <property type="chains" value="A/B/C=126-398"/>
</dbReference>
<dbReference type="PDB" id="2AES">
    <property type="method" value="X-ray"/>
    <property type="resolution" value="2.00 A"/>
    <property type="chains" value="A/B/C=126-398"/>
</dbReference>
<dbReference type="PDB" id="2AGD">
    <property type="method" value="X-ray"/>
    <property type="resolution" value="1.90 A"/>
    <property type="chains" value="A/B/C=126-398"/>
</dbReference>
<dbReference type="PDB" id="2AH9">
    <property type="method" value="X-ray"/>
    <property type="resolution" value="2.00 A"/>
    <property type="chains" value="A/B/C=126-398"/>
</dbReference>
<dbReference type="PDB" id="2FY7">
    <property type="method" value="X-ray"/>
    <property type="resolution" value="1.70 A"/>
    <property type="chains" value="A=126-398"/>
</dbReference>
<dbReference type="PDB" id="2FYA">
    <property type="method" value="X-ray"/>
    <property type="resolution" value="1.90 A"/>
    <property type="chains" value="A=126-398"/>
</dbReference>
<dbReference type="PDB" id="2FYB">
    <property type="method" value="X-ray"/>
    <property type="resolution" value="1.90 A"/>
    <property type="chains" value="A=126-398"/>
</dbReference>
<dbReference type="PDB" id="3EE5">
    <property type="method" value="X-ray"/>
    <property type="resolution" value="2.20 A"/>
    <property type="chains" value="A/B/C=126-398"/>
</dbReference>
<dbReference type="PDB" id="4EE3">
    <property type="method" value="X-ray"/>
    <property type="resolution" value="2.30 A"/>
    <property type="chains" value="A/B/C=126-398"/>
</dbReference>
<dbReference type="PDB" id="4EE4">
    <property type="method" value="X-ray"/>
    <property type="resolution" value="1.95 A"/>
    <property type="chains" value="A/B/C=126-398"/>
</dbReference>
<dbReference type="PDB" id="4EE5">
    <property type="method" value="X-ray"/>
    <property type="resolution" value="2.20 A"/>
    <property type="chains" value="A/B/C=126-398"/>
</dbReference>
<dbReference type="PDB" id="4EEA">
    <property type="method" value="X-ray"/>
    <property type="resolution" value="2.00 A"/>
    <property type="chains" value="A/B/C=126-398"/>
</dbReference>
<dbReference type="PDB" id="4EEG">
    <property type="method" value="X-ray"/>
    <property type="resolution" value="2.20 A"/>
    <property type="chains" value="A/B/C=126-398"/>
</dbReference>
<dbReference type="PDB" id="4EEM">
    <property type="method" value="X-ray"/>
    <property type="resolution" value="2.20 A"/>
    <property type="chains" value="A/B/C=126-398"/>
</dbReference>
<dbReference type="PDB" id="4EEO">
    <property type="method" value="X-ray"/>
    <property type="resolution" value="2.30 A"/>
    <property type="chains" value="A/B/C=126-398"/>
</dbReference>
<dbReference type="PDB" id="4L41">
    <property type="method" value="X-ray"/>
    <property type="resolution" value="2.70 A"/>
    <property type="chains" value="C=126-398"/>
</dbReference>
<dbReference type="PDB" id="6FWT">
    <property type="method" value="X-ray"/>
    <property type="resolution" value="1.84 A"/>
    <property type="chains" value="A=122-398"/>
</dbReference>
<dbReference type="PDB" id="6FWU">
    <property type="method" value="X-ray"/>
    <property type="resolution" value="2.35 A"/>
    <property type="chains" value="A/B=126-398"/>
</dbReference>
<dbReference type="PDBsum" id="2AE7"/>
<dbReference type="PDBsum" id="2AEC"/>
<dbReference type="PDBsum" id="2AES"/>
<dbReference type="PDBsum" id="2AGD"/>
<dbReference type="PDBsum" id="2AH9"/>
<dbReference type="PDBsum" id="2FY7"/>
<dbReference type="PDBsum" id="2FYA"/>
<dbReference type="PDBsum" id="2FYB"/>
<dbReference type="PDBsum" id="3EE5"/>
<dbReference type="PDBsum" id="4EE3"/>
<dbReference type="PDBsum" id="4EE4"/>
<dbReference type="PDBsum" id="4EE5"/>
<dbReference type="PDBsum" id="4EEA"/>
<dbReference type="PDBsum" id="4EEG"/>
<dbReference type="PDBsum" id="4EEM"/>
<dbReference type="PDBsum" id="4EEO"/>
<dbReference type="PDBsum" id="4L41"/>
<dbReference type="PDBsum" id="6FWT"/>
<dbReference type="PDBsum" id="6FWU"/>
<dbReference type="SMR" id="P15291"/>
<dbReference type="BioGRID" id="108950">
    <property type="interactions" value="99"/>
</dbReference>
<dbReference type="ComplexPortal" id="CPX-2811">
    <molecule id="P15291-2"/>
    <property type="entry name" value="Lactose synthase complex"/>
</dbReference>
<dbReference type="FunCoup" id="P15291">
    <property type="interactions" value="1119"/>
</dbReference>
<dbReference type="IntAct" id="P15291">
    <property type="interactions" value="34"/>
</dbReference>
<dbReference type="MINT" id="P15291"/>
<dbReference type="STRING" id="9606.ENSP00000369055"/>
<dbReference type="BindingDB" id="P15291"/>
<dbReference type="ChEMBL" id="CHEMBL4384"/>
<dbReference type="DrugBank" id="DB03814">
    <property type="generic name" value="2-(N-morpholino)ethanesulfonic acid"/>
</dbReference>
<dbReference type="DrugBank" id="DB02696">
    <property type="generic name" value="6-Aminohexyl-uridine-C1,5'-diphosphate"/>
</dbReference>
<dbReference type="DrugBank" id="DB03501">
    <property type="generic name" value="Galactose-uridine-5'-diphosphate"/>
</dbReference>
<dbReference type="DrugBank" id="DB03013">
    <property type="generic name" value="N-acetyl-beta-D-glucosaminyl-(1-&gt;4)-N-acetyl-beta-D-glucosamine"/>
</dbReference>
<dbReference type="DrugBank" id="DB00141">
    <property type="generic name" value="N-Acetylglucosamine"/>
</dbReference>
<dbReference type="DrugBank" id="DB03685">
    <property type="generic name" value="Uridine monophosphate"/>
</dbReference>
<dbReference type="CAZy" id="GT7">
    <property type="family name" value="Glycosyltransferase Family 7"/>
</dbReference>
<dbReference type="MoonProt" id="P15291"/>
<dbReference type="GlyCosmos" id="P15291">
    <property type="glycosylation" value="5 sites, 1 glycan"/>
</dbReference>
<dbReference type="GlyGen" id="P15291">
    <property type="glycosylation" value="12 sites, 3 O-linked glycans (9 sites)"/>
</dbReference>
<dbReference type="iPTMnet" id="P15291"/>
<dbReference type="PhosphoSitePlus" id="P15291"/>
<dbReference type="SwissPalm" id="P15291"/>
<dbReference type="BioMuta" id="B4GALT1"/>
<dbReference type="DMDM" id="116241264"/>
<dbReference type="jPOST" id="P15291"/>
<dbReference type="MassIVE" id="P15291"/>
<dbReference type="PaxDb" id="9606-ENSP00000369055"/>
<dbReference type="PeptideAtlas" id="P15291"/>
<dbReference type="ProteomicsDB" id="53124">
    <molecule id="P15291-1"/>
</dbReference>
<dbReference type="ProteomicsDB" id="53125">
    <molecule id="P15291-2"/>
</dbReference>
<dbReference type="Pumba" id="P15291"/>
<dbReference type="Antibodypedia" id="2256">
    <property type="antibodies" value="177 antibodies from 28 providers"/>
</dbReference>
<dbReference type="DNASU" id="2683"/>
<dbReference type="Ensembl" id="ENST00000379731.5">
    <molecule id="P15291-1"/>
    <property type="protein sequence ID" value="ENSP00000369055.4"/>
    <property type="gene ID" value="ENSG00000086062.14"/>
</dbReference>
<dbReference type="GeneID" id="2683"/>
<dbReference type="KEGG" id="hsa:2683"/>
<dbReference type="MANE-Select" id="ENST00000379731.5">
    <property type="protein sequence ID" value="ENSP00000369055.4"/>
    <property type="RefSeq nucleotide sequence ID" value="NM_001497.4"/>
    <property type="RefSeq protein sequence ID" value="NP_001488.2"/>
</dbReference>
<dbReference type="UCSC" id="uc003zsg.3">
    <molecule id="P15291-1"/>
    <property type="organism name" value="human"/>
</dbReference>
<dbReference type="AGR" id="HGNC:924"/>
<dbReference type="CTD" id="2683"/>
<dbReference type="DisGeNET" id="2683"/>
<dbReference type="GeneCards" id="B4GALT1"/>
<dbReference type="GeneReviews" id="B4GALT1"/>
<dbReference type="HGNC" id="HGNC:924">
    <property type="gene designation" value="B4GALT1"/>
</dbReference>
<dbReference type="HPA" id="ENSG00000086062">
    <property type="expression patterns" value="Low tissue specificity"/>
</dbReference>
<dbReference type="MalaCards" id="B4GALT1"/>
<dbReference type="MIM" id="137060">
    <property type="type" value="gene"/>
</dbReference>
<dbReference type="MIM" id="607091">
    <property type="type" value="phenotype"/>
</dbReference>
<dbReference type="MIM" id="620364">
    <property type="type" value="phenotype"/>
</dbReference>
<dbReference type="neXtProt" id="NX_P15291"/>
<dbReference type="OpenTargets" id="ENSG00000086062"/>
<dbReference type="Orphanet" id="79332">
    <property type="disease" value="B4GALT1-CDG"/>
</dbReference>
<dbReference type="PharmGKB" id="PA25223"/>
<dbReference type="VEuPathDB" id="HostDB:ENSG00000086062"/>
<dbReference type="eggNOG" id="KOG3916">
    <property type="taxonomic scope" value="Eukaryota"/>
</dbReference>
<dbReference type="GeneTree" id="ENSGT00940000155244"/>
<dbReference type="HOGENOM" id="CLU_044391_0_0_1"/>
<dbReference type="InParanoid" id="P15291"/>
<dbReference type="OMA" id="KDCISSH"/>
<dbReference type="OrthoDB" id="10016069at2759"/>
<dbReference type="PAN-GO" id="P15291">
    <property type="GO annotations" value="4 GO annotations based on evolutionary models"/>
</dbReference>
<dbReference type="PhylomeDB" id="P15291"/>
<dbReference type="TreeFam" id="TF312834"/>
<dbReference type="BioCyc" id="MetaCyc:HS01519-MONOMER"/>
<dbReference type="BRENDA" id="2.4.1.133">
    <property type="organism ID" value="2681"/>
</dbReference>
<dbReference type="BRENDA" id="2.4.1.22">
    <property type="organism ID" value="2681"/>
</dbReference>
<dbReference type="BRENDA" id="2.4.1.38">
    <property type="organism ID" value="2681"/>
</dbReference>
<dbReference type="BRENDA" id="2.4.1.90">
    <property type="organism ID" value="2681"/>
</dbReference>
<dbReference type="PathwayCommons" id="P15291"/>
<dbReference type="Reactome" id="R-HSA-1912420">
    <property type="pathway name" value="Pre-NOTCH Processing in Golgi"/>
</dbReference>
<dbReference type="Reactome" id="R-HSA-2022854">
    <property type="pathway name" value="Keratan sulfate biosynthesis"/>
</dbReference>
<dbReference type="Reactome" id="R-HSA-2534343">
    <property type="pathway name" value="Interaction With Cumulus Cells And The Zona Pellucida"/>
</dbReference>
<dbReference type="Reactome" id="R-HSA-3656244">
    <property type="pathway name" value="Defective B4GALT1 causes B4GALT1-CDG (CDG-2d)"/>
</dbReference>
<dbReference type="Reactome" id="R-HSA-4793953">
    <property type="pathway name" value="Defective B4GALT1 causes CDG-2d"/>
</dbReference>
<dbReference type="Reactome" id="R-HSA-5653890">
    <property type="pathway name" value="Lactose synthesis"/>
</dbReference>
<dbReference type="Reactome" id="R-HSA-6798695">
    <property type="pathway name" value="Neutrophil degranulation"/>
</dbReference>
<dbReference type="Reactome" id="R-HSA-975577">
    <property type="pathway name" value="N-Glycan antennae elongation"/>
</dbReference>
<dbReference type="SignaLink" id="P15291"/>
<dbReference type="SIGNOR" id="P15291"/>
<dbReference type="UniPathway" id="UPA00378"/>
<dbReference type="BioGRID-ORCS" id="2683">
    <property type="hits" value="12 hits in 1156 CRISPR screens"/>
</dbReference>
<dbReference type="ChiTaRS" id="B4GALT1">
    <property type="organism name" value="human"/>
</dbReference>
<dbReference type="EvolutionaryTrace" id="P15291"/>
<dbReference type="GeneWiki" id="B4GALT1"/>
<dbReference type="GenomeRNAi" id="2683"/>
<dbReference type="Pharos" id="P15291">
    <property type="development level" value="Tbio"/>
</dbReference>
<dbReference type="PRO" id="PR:P15291"/>
<dbReference type="Proteomes" id="UP000005640">
    <property type="component" value="Chromosome 9"/>
</dbReference>
<dbReference type="RNAct" id="P15291">
    <property type="molecule type" value="protein"/>
</dbReference>
<dbReference type="Bgee" id="ENSG00000086062">
    <property type="expression patterns" value="Expressed in buccal mucosa cell and 189 other cell types or tissues"/>
</dbReference>
<dbReference type="ExpressionAtlas" id="P15291">
    <property type="expression patterns" value="baseline and differential"/>
</dbReference>
<dbReference type="GO" id="GO:0035577">
    <property type="term" value="C:azurophil granule membrane"/>
    <property type="evidence" value="ECO:0000304"/>
    <property type="project" value="Reactome"/>
</dbReference>
<dbReference type="GO" id="GO:0016323">
    <property type="term" value="C:basolateral plasma membrane"/>
    <property type="evidence" value="ECO:0000314"/>
    <property type="project" value="UniProtKB"/>
</dbReference>
<dbReference type="GO" id="GO:0031526">
    <property type="term" value="C:brush border membrane"/>
    <property type="evidence" value="ECO:0000314"/>
    <property type="project" value="UniProtKB"/>
</dbReference>
<dbReference type="GO" id="GO:0030057">
    <property type="term" value="C:desmosome"/>
    <property type="evidence" value="ECO:0000314"/>
    <property type="project" value="UniProtKB"/>
</dbReference>
<dbReference type="GO" id="GO:0009897">
    <property type="term" value="C:external side of plasma membrane"/>
    <property type="evidence" value="ECO:0000314"/>
    <property type="project" value="UniProtKB"/>
</dbReference>
<dbReference type="GO" id="GO:0070062">
    <property type="term" value="C:extracellular exosome"/>
    <property type="evidence" value="ECO:0007005"/>
    <property type="project" value="UniProtKB"/>
</dbReference>
<dbReference type="GO" id="GO:0005615">
    <property type="term" value="C:extracellular space"/>
    <property type="evidence" value="ECO:0007005"/>
    <property type="project" value="UniProtKB"/>
</dbReference>
<dbReference type="GO" id="GO:0030175">
    <property type="term" value="C:filopodium"/>
    <property type="evidence" value="ECO:0007669"/>
    <property type="project" value="UniProtKB-SubCell"/>
</dbReference>
<dbReference type="GO" id="GO:0005794">
    <property type="term" value="C:Golgi apparatus"/>
    <property type="evidence" value="ECO:0000314"/>
    <property type="project" value="HPA"/>
</dbReference>
<dbReference type="GO" id="GO:0032580">
    <property type="term" value="C:Golgi cisterna membrane"/>
    <property type="evidence" value="ECO:0007669"/>
    <property type="project" value="UniProtKB-SubCell"/>
</dbReference>
<dbReference type="GO" id="GO:0000139">
    <property type="term" value="C:Golgi membrane"/>
    <property type="evidence" value="ECO:0000304"/>
    <property type="project" value="Reactome"/>
</dbReference>
<dbReference type="GO" id="GO:0000138">
    <property type="term" value="C:Golgi trans cisterna"/>
    <property type="evidence" value="ECO:0000314"/>
    <property type="project" value="UniProtKB"/>
</dbReference>
<dbReference type="GO" id="GO:0016020">
    <property type="term" value="C:membrane"/>
    <property type="evidence" value="ECO:0007005"/>
    <property type="project" value="UniProtKB"/>
</dbReference>
<dbReference type="GO" id="GO:0005886">
    <property type="term" value="C:plasma membrane"/>
    <property type="evidence" value="ECO:0000304"/>
    <property type="project" value="Reactome"/>
</dbReference>
<dbReference type="GO" id="GO:0032991">
    <property type="term" value="C:protein-containing complex"/>
    <property type="evidence" value="ECO:0007669"/>
    <property type="project" value="Ensembl"/>
</dbReference>
<dbReference type="GO" id="GO:0030667">
    <property type="term" value="C:secretory granule membrane"/>
    <property type="evidence" value="ECO:0000304"/>
    <property type="project" value="Reactome"/>
</dbReference>
<dbReference type="GO" id="GO:0043014">
    <property type="term" value="F:alpha-tubulin binding"/>
    <property type="evidence" value="ECO:0000314"/>
    <property type="project" value="UniProtKB"/>
</dbReference>
<dbReference type="GO" id="GO:0003831">
    <property type="term" value="F:beta-N-acetylglucosaminylglycopeptide beta-1,4-galactosyltransferase activity"/>
    <property type="evidence" value="ECO:0000314"/>
    <property type="project" value="UniProtKB"/>
</dbReference>
<dbReference type="GO" id="GO:0048487">
    <property type="term" value="F:beta-tubulin binding"/>
    <property type="evidence" value="ECO:0000353"/>
    <property type="project" value="UniProtKB"/>
</dbReference>
<dbReference type="GO" id="GO:0008378">
    <property type="term" value="F:galactosyltransferase activity"/>
    <property type="evidence" value="ECO:0000303"/>
    <property type="project" value="UniProtKB"/>
</dbReference>
<dbReference type="GO" id="GO:0042802">
    <property type="term" value="F:identical protein binding"/>
    <property type="evidence" value="ECO:0000353"/>
    <property type="project" value="UniProtKB"/>
</dbReference>
<dbReference type="GO" id="GO:0004461">
    <property type="term" value="F:lactose synthase activity"/>
    <property type="evidence" value="ECO:0000314"/>
    <property type="project" value="UniProtKB"/>
</dbReference>
<dbReference type="GO" id="GO:0030145">
    <property type="term" value="F:manganese ion binding"/>
    <property type="evidence" value="ECO:0000314"/>
    <property type="project" value="UniProtKB"/>
</dbReference>
<dbReference type="GO" id="GO:0003945">
    <property type="term" value="F:N-acetyllactosamine synthase activity"/>
    <property type="evidence" value="ECO:0000314"/>
    <property type="project" value="UniProtKB"/>
</dbReference>
<dbReference type="GO" id="GO:0035250">
    <property type="term" value="F:UDP-galactosyltransferase activity"/>
    <property type="evidence" value="ECO:0000314"/>
    <property type="project" value="UniProtKB"/>
</dbReference>
<dbReference type="GO" id="GO:0002526">
    <property type="term" value="P:acute inflammatory response"/>
    <property type="evidence" value="ECO:0007669"/>
    <property type="project" value="Ensembl"/>
</dbReference>
<dbReference type="GO" id="GO:0060055">
    <property type="term" value="P:angiogenesis involved in wound healing"/>
    <property type="evidence" value="ECO:0007669"/>
    <property type="project" value="Ensembl"/>
</dbReference>
<dbReference type="GO" id="GO:0007339">
    <property type="term" value="P:binding of sperm to zona pellucida"/>
    <property type="evidence" value="ECO:0007669"/>
    <property type="project" value="Ensembl"/>
</dbReference>
<dbReference type="GO" id="GO:0007155">
    <property type="term" value="P:cell adhesion"/>
    <property type="evidence" value="ECO:0007669"/>
    <property type="project" value="Ensembl"/>
</dbReference>
<dbReference type="GO" id="GO:0045136">
    <property type="term" value="P:development of secondary sexual characteristics"/>
    <property type="evidence" value="ECO:0007669"/>
    <property type="project" value="Ensembl"/>
</dbReference>
<dbReference type="GO" id="GO:0002064">
    <property type="term" value="P:epithelial cell development"/>
    <property type="evidence" value="ECO:0007669"/>
    <property type="project" value="Ensembl"/>
</dbReference>
<dbReference type="GO" id="GO:0050673">
    <property type="term" value="P:epithelial cell proliferation"/>
    <property type="evidence" value="ECO:0007669"/>
    <property type="project" value="Ensembl"/>
</dbReference>
<dbReference type="GO" id="GO:0030198">
    <property type="term" value="P:extracellular matrix organization"/>
    <property type="evidence" value="ECO:0007669"/>
    <property type="project" value="Ensembl"/>
</dbReference>
<dbReference type="GO" id="GO:0006012">
    <property type="term" value="P:galactose metabolic process"/>
    <property type="evidence" value="ECO:0007669"/>
    <property type="project" value="Ensembl"/>
</dbReference>
<dbReference type="GO" id="GO:0005989">
    <property type="term" value="P:lactose biosynthetic process"/>
    <property type="evidence" value="ECO:0000304"/>
    <property type="project" value="Reactome"/>
</dbReference>
<dbReference type="GO" id="GO:0006629">
    <property type="term" value="P:lipid metabolic process"/>
    <property type="evidence" value="ECO:0000315"/>
    <property type="project" value="UniProtKB"/>
</dbReference>
<dbReference type="GO" id="GO:1905517">
    <property type="term" value="P:macrophage migration"/>
    <property type="evidence" value="ECO:0007669"/>
    <property type="project" value="Ensembl"/>
</dbReference>
<dbReference type="GO" id="GO:0050680">
    <property type="term" value="P:negative regulation of epithelial cell proliferation"/>
    <property type="evidence" value="ECO:0007669"/>
    <property type="project" value="Ensembl"/>
</dbReference>
<dbReference type="GO" id="GO:0009312">
    <property type="term" value="P:oligosaccharide biosynthetic process"/>
    <property type="evidence" value="ECO:0000314"/>
    <property type="project" value="UniProtKB"/>
</dbReference>
<dbReference type="GO" id="GO:0007341">
    <property type="term" value="P:penetration of zona pellucida"/>
    <property type="evidence" value="ECO:0007669"/>
    <property type="project" value="Ensembl"/>
</dbReference>
<dbReference type="GO" id="GO:0043065">
    <property type="term" value="P:positive regulation of apoptotic process"/>
    <property type="evidence" value="ECO:0007669"/>
    <property type="project" value="Ensembl"/>
</dbReference>
<dbReference type="GO" id="GO:0061755">
    <property type="term" value="P:positive regulation of circulating fibrinogen levels"/>
    <property type="evidence" value="ECO:0000315"/>
    <property type="project" value="UniProtKB"/>
</dbReference>
<dbReference type="GO" id="GO:0060054">
    <property type="term" value="P:positive regulation of epithelial cell proliferation involved in wound healing"/>
    <property type="evidence" value="ECO:0007669"/>
    <property type="project" value="Ensembl"/>
</dbReference>
<dbReference type="GO" id="GO:0006487">
    <property type="term" value="P:protein N-linked glycosylation"/>
    <property type="evidence" value="ECO:0000314"/>
    <property type="project" value="UniProtKB"/>
</dbReference>
<dbReference type="GO" id="GO:0060046">
    <property type="term" value="P:regulation of acrosome reaction"/>
    <property type="evidence" value="ECO:0007669"/>
    <property type="project" value="Ensembl"/>
</dbReference>
<dbReference type="CDD" id="cd00899">
    <property type="entry name" value="b4GalT"/>
    <property type="match status" value="1"/>
</dbReference>
<dbReference type="FunFam" id="3.90.550.10:FF:000028">
    <property type="entry name" value="beta-1,4-galactosyltransferase 1"/>
    <property type="match status" value="1"/>
</dbReference>
<dbReference type="Gene3D" id="3.90.550.10">
    <property type="entry name" value="Spore Coat Polysaccharide Biosynthesis Protein SpsA, Chain A"/>
    <property type="match status" value="1"/>
</dbReference>
<dbReference type="InterPro" id="IPR003859">
    <property type="entry name" value="Galactosyl_T"/>
</dbReference>
<dbReference type="InterPro" id="IPR027791">
    <property type="entry name" value="Galactosyl_T_C"/>
</dbReference>
<dbReference type="InterPro" id="IPR027995">
    <property type="entry name" value="Galactosyl_T_N"/>
</dbReference>
<dbReference type="InterPro" id="IPR029044">
    <property type="entry name" value="Nucleotide-diphossugar_trans"/>
</dbReference>
<dbReference type="PANTHER" id="PTHR19300">
    <property type="entry name" value="BETA-1,4-GALACTOSYLTRANSFERASE"/>
    <property type="match status" value="1"/>
</dbReference>
<dbReference type="PANTHER" id="PTHR19300:SF5">
    <property type="entry name" value="BETA-1,4-GALACTOSYLTRANSFERASE 1"/>
    <property type="match status" value="1"/>
</dbReference>
<dbReference type="Pfam" id="PF02709">
    <property type="entry name" value="Glyco_transf_7C"/>
    <property type="match status" value="1"/>
</dbReference>
<dbReference type="Pfam" id="PF13733">
    <property type="entry name" value="Glyco_transf_7N"/>
    <property type="match status" value="1"/>
</dbReference>
<dbReference type="PRINTS" id="PR02050">
    <property type="entry name" value="B14GALTRFASE"/>
</dbReference>
<dbReference type="SUPFAM" id="SSF53448">
    <property type="entry name" value="Nucleotide-diphospho-sugar transferases"/>
    <property type="match status" value="1"/>
</dbReference>
<feature type="chain" id="PRO_0000012278" description="Beta-1,4-galactosyltransferase 1">
    <location>
        <begin position="1"/>
        <end position="398"/>
    </location>
</feature>
<feature type="chain" id="PRO_0000296229" description="Processed beta-1,4-galactosyltransferase 1">
    <location>
        <begin status="unknown"/>
        <end position="398"/>
    </location>
</feature>
<feature type="topological domain" description="Cytoplasmic" evidence="4">
    <location>
        <begin position="1"/>
        <end position="24"/>
    </location>
</feature>
<feature type="transmembrane region" description="Helical; Signal-anchor for type II membrane protein" evidence="4">
    <location>
        <begin position="25"/>
        <end position="44"/>
    </location>
</feature>
<feature type="topological domain" description="Lumenal" evidence="4">
    <location>
        <begin position="45"/>
        <end position="398"/>
    </location>
</feature>
<feature type="region of interest" description="Disordered" evidence="5">
    <location>
        <begin position="61"/>
        <end position="117"/>
    </location>
</feature>
<feature type="compositionally biased region" description="Polar residues" evidence="5">
    <location>
        <begin position="61"/>
        <end position="76"/>
    </location>
</feature>
<feature type="binding site">
    <location>
        <begin position="183"/>
        <end position="187"/>
    </location>
    <ligand>
        <name>UDP-alpha-D-galactose</name>
        <dbReference type="ChEBI" id="CHEBI:66914"/>
    </ligand>
</feature>
<feature type="binding site" evidence="1">
    <location>
        <begin position="222"/>
        <end position="224"/>
    </location>
    <ligand>
        <name>UDP-alpha-D-galactose</name>
        <dbReference type="ChEBI" id="CHEBI:66914"/>
    </ligand>
</feature>
<feature type="binding site">
    <location>
        <begin position="249"/>
        <end position="250"/>
    </location>
    <ligand>
        <name>UDP-alpha-D-galactose</name>
        <dbReference type="ChEBI" id="CHEBI:66914"/>
    </ligand>
</feature>
<feature type="binding site">
    <location>
        <position position="250"/>
    </location>
    <ligand>
        <name>Mn(2+)</name>
        <dbReference type="ChEBI" id="CHEBI:29035"/>
    </ligand>
</feature>
<feature type="binding site" evidence="8">
    <location>
        <position position="310"/>
    </location>
    <ligand>
        <name>UDP-alpha-D-galactose</name>
        <dbReference type="ChEBI" id="CHEBI:66914"/>
    </ligand>
</feature>
<feature type="binding site">
    <location>
        <begin position="312"/>
        <end position="315"/>
    </location>
    <ligand>
        <name>N-acetyl-D-glucosamine</name>
        <dbReference type="ChEBI" id="CHEBI:506227"/>
    </ligand>
</feature>
<feature type="binding site">
    <location>
        <begin position="343"/>
        <end position="346"/>
    </location>
    <ligand>
        <name>UDP-alpha-D-galactose</name>
        <dbReference type="ChEBI" id="CHEBI:66914"/>
    </ligand>
</feature>
<feature type="binding site">
    <location>
        <position position="343"/>
    </location>
    <ligand>
        <name>Mn(2+)</name>
        <dbReference type="ChEBI" id="CHEBI:29035"/>
    </ligand>
</feature>
<feature type="binding site" evidence="7 10">
    <location>
        <position position="355"/>
    </location>
    <ligand>
        <name>N-acetyl-D-glucosamine</name>
        <dbReference type="ChEBI" id="CHEBI:506227"/>
    </ligand>
</feature>
<feature type="site" description="Cleavage; to produce soluble form">
    <location>
        <begin position="77"/>
        <end position="78"/>
    </location>
</feature>
<feature type="glycosylation site" description="N-linked (GlcNAc...) asparagine" evidence="4">
    <location>
        <position position="113"/>
    </location>
</feature>
<feature type="disulfide bond" evidence="7 8 20 21 22 23 24 25 26 27 28 29 30 31 32 33 34 35 36">
    <location>
        <begin position="130"/>
        <end position="172"/>
    </location>
</feature>
<feature type="disulfide bond" evidence="7 8 20 21 22 23 24 25 26 27 28 29 30 31 32 33 34 35 36">
    <location>
        <begin position="243"/>
        <end position="262"/>
    </location>
</feature>
<feature type="splice variant" id="VSP_018802" description="In isoform Short." evidence="18">
    <location>
        <begin position="1"/>
        <end position="13"/>
    </location>
</feature>
<feature type="sequence variant" id="VAR_054019" description="In CDG2D; uncertain significance; dbSNP:rs1065764." evidence="14">
    <original>R</original>
    <variation>W</variation>
    <location>
        <position position="21"/>
    </location>
</feature>
<feature type="sequence variant" id="VAR_088575" description="In CDG2D; likely pathogenic." evidence="13">
    <location>
        <begin position="193"/>
        <end position="398"/>
    </location>
</feature>
<feature type="sequence variant" id="VAR_054020" description="In dbSNP:rs9169.">
    <original>H</original>
    <variation>R</variation>
    <location>
        <position position="257"/>
    </location>
</feature>
<feature type="sequence variant" id="VAR_088576" description="Protective factor against coronary artery disease; strongly correlated with low plasma LDL-cholesterol and fibrinogen levels; decreased UDP-galactosyltransferase activity; dbSNP:rs551564683." evidence="15">
    <original>N</original>
    <variation>S</variation>
    <location>
        <position position="352"/>
    </location>
</feature>
<feature type="mutagenesis site" description="Reduction in N-acetylglucosamine binding." evidence="12">
    <original>Y</original>
    <variation>G</variation>
    <location>
        <position position="282"/>
    </location>
</feature>
<feature type="mutagenesis site" description="No change in enzymatic activity." evidence="12">
    <original>Y</original>
    <variation>F</variation>
    <location>
        <position position="285"/>
    </location>
</feature>
<feature type="mutagenesis site" description="Reduction in N-acetylglucosamine and UDP-galactose binding." evidence="12">
    <original>Y</original>
    <variation>G</variation>
    <location>
        <position position="307"/>
    </location>
</feature>
<feature type="mutagenesis site" description="Reduction in N-acetylglucosamine binding." evidence="12">
    <original>W</original>
    <variation>G</variation>
    <location>
        <position position="308"/>
    </location>
</feature>
<feature type="mutagenesis site" description="Reduction in N-acetylglucosamine binding." evidence="12">
    <original>W</original>
    <variation>G</variation>
    <location>
        <position position="310"/>
    </location>
</feature>
<feature type="mutagenesis site" description="Favors the closed conformation of the enzyme." evidence="7">
    <original>M</original>
    <variation>H</variation>
    <location>
        <position position="340"/>
    </location>
</feature>
<feature type="sequence conflict" description="In Ref. 4; CAA31611 and 5; BAA06188." evidence="18" ref="4 5">
    <original>G</original>
    <variation>R</variation>
    <location>
        <position position="10"/>
    </location>
</feature>
<feature type="sequence conflict" description="In Ref. 1; AAA35936, 3; AAB00776 and 6; AAA68220." evidence="18" ref="1 3 6">
    <location>
        <position position="11"/>
    </location>
</feature>
<feature type="sequence conflict" description="In Ref. 1; AAA35936/AAA35937 and 6; AAA68220." evidence="18" ref="1 6">
    <original>AL</original>
    <variation>VW</variation>
    <location>
        <begin position="31"/>
        <end position="32"/>
    </location>
</feature>
<feature type="sequence conflict" description="In Ref. 4; CAA31611." evidence="18" ref="4">
    <original>G</original>
    <variation>R</variation>
    <location>
        <position position="35"/>
    </location>
</feature>
<feature type="sequence conflict" description="In Ref. 5; BAA06188." evidence="18" ref="5">
    <original>E</original>
    <variation>D</variation>
    <location>
        <position position="76"/>
    </location>
</feature>
<feature type="sequence conflict" description="In Ref. 6; AAA68219." evidence="18" ref="6">
    <original>SSQPRPGGDSSPVVDSGPGPASNLT</original>
    <variation>GKHAKSSFKQFLLQIKELSNPIDLD</variation>
    <location>
        <begin position="91"/>
        <end position="115"/>
    </location>
</feature>
<feature type="sequence conflict" description="In Ref. 1; CAA32247 and 3; AAB00776." evidence="18" ref="1 3">
    <original>Y</original>
    <variation>YGIY</variation>
    <location>
        <position position="212"/>
    </location>
</feature>
<feature type="sequence conflict" description="In Ref. 6; AAA68218." evidence="18" ref="6">
    <original>Y</original>
    <variation>D</variation>
    <location>
        <position position="260"/>
    </location>
</feature>
<feature type="sequence conflict" description="In Ref. 5; BAA06188." evidence="18" ref="5">
    <original>L</original>
    <variation>S</variation>
    <location>
        <position position="292"/>
    </location>
</feature>
<feature type="sequence conflict" description="In Ref. 5; BAA06188." evidence="18" ref="5">
    <original>R</original>
    <variation>T</variation>
    <location>
        <position position="337"/>
    </location>
</feature>
<feature type="sequence conflict" description="In Ref. 6; AAA68220." evidence="18" ref="6">
    <original>MI</original>
    <variation>PA</variation>
    <location>
        <begin position="340"/>
        <end position="341"/>
    </location>
</feature>
<feature type="helix" evidence="38">
    <location>
        <begin position="151"/>
        <end position="157"/>
    </location>
</feature>
<feature type="turn" evidence="38">
    <location>
        <begin position="163"/>
        <end position="165"/>
    </location>
</feature>
<feature type="strand" evidence="38">
    <location>
        <begin position="170"/>
        <end position="173"/>
    </location>
</feature>
<feature type="strand" evidence="38">
    <location>
        <begin position="177"/>
        <end position="186"/>
    </location>
</feature>
<feature type="helix" evidence="38">
    <location>
        <begin position="188"/>
        <end position="204"/>
    </location>
</feature>
<feature type="strand" evidence="38">
    <location>
        <begin position="208"/>
        <end position="216"/>
    </location>
</feature>
<feature type="strand" evidence="38">
    <location>
        <begin position="218"/>
        <end position="220"/>
    </location>
</feature>
<feature type="helix" evidence="38">
    <location>
        <begin position="224"/>
        <end position="238"/>
    </location>
</feature>
<feature type="strand" evidence="38">
    <location>
        <begin position="243"/>
        <end position="247"/>
    </location>
</feature>
<feature type="strand" evidence="38">
    <location>
        <begin position="251"/>
        <end position="255"/>
    </location>
</feature>
<feature type="helix" evidence="38">
    <location>
        <begin position="274"/>
        <end position="276"/>
    </location>
</feature>
<feature type="helix" evidence="41">
    <location>
        <begin position="280"/>
        <end position="283"/>
    </location>
</feature>
<feature type="turn" evidence="41">
    <location>
        <begin position="284"/>
        <end position="286"/>
    </location>
</feature>
<feature type="strand" evidence="38">
    <location>
        <begin position="288"/>
        <end position="293"/>
    </location>
</feature>
<feature type="helix" evidence="38">
    <location>
        <begin position="294"/>
        <end position="299"/>
    </location>
</feature>
<feature type="strand" evidence="37">
    <location>
        <begin position="309"/>
        <end position="312"/>
    </location>
</feature>
<feature type="helix" evidence="38">
    <location>
        <begin position="313"/>
        <end position="323"/>
    </location>
</feature>
<feature type="turn" evidence="38">
    <location>
        <begin position="333"/>
        <end position="335"/>
    </location>
</feature>
<feature type="strand" evidence="38">
    <location>
        <begin position="337"/>
        <end position="340"/>
    </location>
</feature>
<feature type="helix" evidence="40">
    <location>
        <begin position="344"/>
        <end position="346"/>
    </location>
</feature>
<feature type="helix" evidence="39">
    <location>
        <begin position="347"/>
        <end position="349"/>
    </location>
</feature>
<feature type="helix" evidence="38">
    <location>
        <begin position="359"/>
        <end position="365"/>
    </location>
</feature>
<feature type="turn" evidence="38">
    <location>
        <begin position="366"/>
        <end position="368"/>
    </location>
</feature>
<feature type="helix" evidence="38">
    <location>
        <begin position="371"/>
        <end position="373"/>
    </location>
</feature>
<feature type="strand" evidence="38">
    <location>
        <begin position="377"/>
        <end position="384"/>
    </location>
</feature>
<feature type="strand" evidence="38">
    <location>
        <begin position="387"/>
        <end position="393"/>
    </location>
</feature>
<reference key="1">
    <citation type="journal article" date="1988" name="Biochem. Biophys. Res. Commun.">
        <title>Identification of the full-length coding sequence for human galactosyltransferase (beta-N-acetylglucosaminide: beta 1,4-galactosyltransferase).</title>
        <authorList>
            <person name="Masri K.A."/>
            <person name="Appert H.E."/>
            <person name="Fukuda M.N."/>
        </authorList>
    </citation>
    <scope>NUCLEOTIDE SEQUENCE [MRNA]</scope>
</reference>
<reference key="2">
    <citation type="journal article" date="1990" name="Nucleic Acids Res.">
        <title>Near identity of HeLa cell galactosyltransferase with the human placental enzyme.</title>
        <authorList>
            <person name="Watzele G."/>
            <person name="Berger E.G."/>
        </authorList>
    </citation>
    <scope>NUCLEOTIDE SEQUENCE [MRNA]</scope>
</reference>
<reference key="3">
    <citation type="journal article" date="1991" name="Biochem. Biophys. Res. Commun.">
        <title>Genomic structure and expression of human beta-1,4-galactosyltransferase.</title>
        <authorList>
            <person name="Mengle-Gaw L."/>
            <person name="McCoy-Haman M.F."/>
            <person name="Tiemeier D.C."/>
        </authorList>
    </citation>
    <scope>NUCLEOTIDE SEQUENCE [GENOMIC DNA]</scope>
</reference>
<reference key="4">
    <citation type="journal article" date="1992" name="Cancer Res.">
        <title>Complementary DNA cloning for galactosyltransferase associated with tumor and determination of antigenic epitopes recognized by specific monoclonal antibodies.</title>
        <authorList>
            <person name="Uejima T."/>
            <person name="Uemura M."/>
            <person name="Nozawa S."/>
            <person name="Narimatsu H."/>
        </authorList>
    </citation>
    <scope>NUCLEOTIDE SEQUENCE [MRNA]</scope>
    <source>
        <tissue>Placenta</tissue>
    </source>
</reference>
<reference key="5">
    <citation type="journal article" date="1995" name="Glycobiology">
        <title>The beta 1, 4-galactosyltransferase gene is post-transcriptionally regulated during differentiation of mouse F9 teratocarcinoma cells.</title>
        <authorList>
            <person name="Kudo T."/>
            <person name="Narimatsu H."/>
        </authorList>
    </citation>
    <scope>NUCLEOTIDE SEQUENCE [MRNA]</scope>
    <source>
        <tissue>Placenta</tissue>
    </source>
</reference>
<reference key="6">
    <citation type="journal article" date="1995" name="Int. J. Biochem. Cell Biol.">
        <title>Analysis of the sequences of human beta-1,4-galactosyltransferase cDNA clones.</title>
        <authorList>
            <person name="Chatterjee S.K."/>
            <person name="Mukerjee S."/>
            <person name="Tripathi P.K."/>
        </authorList>
    </citation>
    <scope>NUCLEOTIDE SEQUENCE [MRNA]</scope>
    <source>
        <tissue>Fetal liver</tissue>
    </source>
</reference>
<reference key="7">
    <citation type="journal article" date="2004" name="Nat. Genet.">
        <title>Complete sequencing and characterization of 21,243 full-length human cDNAs.</title>
        <authorList>
            <person name="Ota T."/>
            <person name="Suzuki Y."/>
            <person name="Nishikawa T."/>
            <person name="Otsuki T."/>
            <person name="Sugiyama T."/>
            <person name="Irie R."/>
            <person name="Wakamatsu A."/>
            <person name="Hayashi K."/>
            <person name="Sato H."/>
            <person name="Nagai K."/>
            <person name="Kimura K."/>
            <person name="Makita H."/>
            <person name="Sekine M."/>
            <person name="Obayashi M."/>
            <person name="Nishi T."/>
            <person name="Shibahara T."/>
            <person name="Tanaka T."/>
            <person name="Ishii S."/>
            <person name="Yamamoto J."/>
            <person name="Saito K."/>
            <person name="Kawai Y."/>
            <person name="Isono Y."/>
            <person name="Nakamura Y."/>
            <person name="Nagahari K."/>
            <person name="Murakami K."/>
            <person name="Yasuda T."/>
            <person name="Iwayanagi T."/>
            <person name="Wagatsuma M."/>
            <person name="Shiratori A."/>
            <person name="Sudo H."/>
            <person name="Hosoiri T."/>
            <person name="Kaku Y."/>
            <person name="Kodaira H."/>
            <person name="Kondo H."/>
            <person name="Sugawara M."/>
            <person name="Takahashi M."/>
            <person name="Kanda K."/>
            <person name="Yokoi T."/>
            <person name="Furuya T."/>
            <person name="Kikkawa E."/>
            <person name="Omura Y."/>
            <person name="Abe K."/>
            <person name="Kamihara K."/>
            <person name="Katsuta N."/>
            <person name="Sato K."/>
            <person name="Tanikawa M."/>
            <person name="Yamazaki M."/>
            <person name="Ninomiya K."/>
            <person name="Ishibashi T."/>
            <person name="Yamashita H."/>
            <person name="Murakawa K."/>
            <person name="Fujimori K."/>
            <person name="Tanai H."/>
            <person name="Kimata M."/>
            <person name="Watanabe M."/>
            <person name="Hiraoka S."/>
            <person name="Chiba Y."/>
            <person name="Ishida S."/>
            <person name="Ono Y."/>
            <person name="Takiguchi S."/>
            <person name="Watanabe S."/>
            <person name="Yosida M."/>
            <person name="Hotuta T."/>
            <person name="Kusano J."/>
            <person name="Kanehori K."/>
            <person name="Takahashi-Fujii A."/>
            <person name="Hara H."/>
            <person name="Tanase T.-O."/>
            <person name="Nomura Y."/>
            <person name="Togiya S."/>
            <person name="Komai F."/>
            <person name="Hara R."/>
            <person name="Takeuchi K."/>
            <person name="Arita M."/>
            <person name="Imose N."/>
            <person name="Musashino K."/>
            <person name="Yuuki H."/>
            <person name="Oshima A."/>
            <person name="Sasaki N."/>
            <person name="Aotsuka S."/>
            <person name="Yoshikawa Y."/>
            <person name="Matsunawa H."/>
            <person name="Ichihara T."/>
            <person name="Shiohata N."/>
            <person name="Sano S."/>
            <person name="Moriya S."/>
            <person name="Momiyama H."/>
            <person name="Satoh N."/>
            <person name="Takami S."/>
            <person name="Terashima Y."/>
            <person name="Suzuki O."/>
            <person name="Nakagawa S."/>
            <person name="Senoh A."/>
            <person name="Mizoguchi H."/>
            <person name="Goto Y."/>
            <person name="Shimizu F."/>
            <person name="Wakebe H."/>
            <person name="Hishigaki H."/>
            <person name="Watanabe T."/>
            <person name="Sugiyama A."/>
            <person name="Takemoto M."/>
            <person name="Kawakami B."/>
            <person name="Yamazaki M."/>
            <person name="Watanabe K."/>
            <person name="Kumagai A."/>
            <person name="Itakura S."/>
            <person name="Fukuzumi Y."/>
            <person name="Fujimori Y."/>
            <person name="Komiyama M."/>
            <person name="Tashiro H."/>
            <person name="Tanigami A."/>
            <person name="Fujiwara T."/>
            <person name="Ono T."/>
            <person name="Yamada K."/>
            <person name="Fujii Y."/>
            <person name="Ozaki K."/>
            <person name="Hirao M."/>
            <person name="Ohmori Y."/>
            <person name="Kawabata A."/>
            <person name="Hikiji T."/>
            <person name="Kobatake N."/>
            <person name="Inagaki H."/>
            <person name="Ikema Y."/>
            <person name="Okamoto S."/>
            <person name="Okitani R."/>
            <person name="Kawakami T."/>
            <person name="Noguchi S."/>
            <person name="Itoh T."/>
            <person name="Shigeta K."/>
            <person name="Senba T."/>
            <person name="Matsumura K."/>
            <person name="Nakajima Y."/>
            <person name="Mizuno T."/>
            <person name="Morinaga M."/>
            <person name="Sasaki M."/>
            <person name="Togashi T."/>
            <person name="Oyama M."/>
            <person name="Hata H."/>
            <person name="Watanabe M."/>
            <person name="Komatsu T."/>
            <person name="Mizushima-Sugano J."/>
            <person name="Satoh T."/>
            <person name="Shirai Y."/>
            <person name="Takahashi Y."/>
            <person name="Nakagawa K."/>
            <person name="Okumura K."/>
            <person name="Nagase T."/>
            <person name="Nomura N."/>
            <person name="Kikuchi H."/>
            <person name="Masuho Y."/>
            <person name="Yamashita R."/>
            <person name="Nakai K."/>
            <person name="Yada T."/>
            <person name="Nakamura Y."/>
            <person name="Ohara O."/>
            <person name="Isogai T."/>
            <person name="Sugano S."/>
        </authorList>
    </citation>
    <scope>NUCLEOTIDE SEQUENCE [LARGE SCALE MRNA] (ISOFORM LONG)</scope>
    <source>
        <tissue>Testis</tissue>
    </source>
</reference>
<reference key="8">
    <citation type="journal article" date="2004" name="Nature">
        <title>DNA sequence and analysis of human chromosome 9.</title>
        <authorList>
            <person name="Humphray S.J."/>
            <person name="Oliver K."/>
            <person name="Hunt A.R."/>
            <person name="Plumb R.W."/>
            <person name="Loveland J.E."/>
            <person name="Howe K.L."/>
            <person name="Andrews T.D."/>
            <person name="Searle S."/>
            <person name="Hunt S.E."/>
            <person name="Scott C.E."/>
            <person name="Jones M.C."/>
            <person name="Ainscough R."/>
            <person name="Almeida J.P."/>
            <person name="Ambrose K.D."/>
            <person name="Ashwell R.I.S."/>
            <person name="Babbage A.K."/>
            <person name="Babbage S."/>
            <person name="Bagguley C.L."/>
            <person name="Bailey J."/>
            <person name="Banerjee R."/>
            <person name="Barker D.J."/>
            <person name="Barlow K.F."/>
            <person name="Bates K."/>
            <person name="Beasley H."/>
            <person name="Beasley O."/>
            <person name="Bird C.P."/>
            <person name="Bray-Allen S."/>
            <person name="Brown A.J."/>
            <person name="Brown J.Y."/>
            <person name="Burford D."/>
            <person name="Burrill W."/>
            <person name="Burton J."/>
            <person name="Carder C."/>
            <person name="Carter N.P."/>
            <person name="Chapman J.C."/>
            <person name="Chen Y."/>
            <person name="Clarke G."/>
            <person name="Clark S.Y."/>
            <person name="Clee C.M."/>
            <person name="Clegg S."/>
            <person name="Collier R.E."/>
            <person name="Corby N."/>
            <person name="Crosier M."/>
            <person name="Cummings A.T."/>
            <person name="Davies J."/>
            <person name="Dhami P."/>
            <person name="Dunn M."/>
            <person name="Dutta I."/>
            <person name="Dyer L.W."/>
            <person name="Earthrowl M.E."/>
            <person name="Faulkner L."/>
            <person name="Fleming C.J."/>
            <person name="Frankish A."/>
            <person name="Frankland J.A."/>
            <person name="French L."/>
            <person name="Fricker D.G."/>
            <person name="Garner P."/>
            <person name="Garnett J."/>
            <person name="Ghori J."/>
            <person name="Gilbert J.G.R."/>
            <person name="Glison C."/>
            <person name="Grafham D.V."/>
            <person name="Gribble S."/>
            <person name="Griffiths C."/>
            <person name="Griffiths-Jones S."/>
            <person name="Grocock R."/>
            <person name="Guy J."/>
            <person name="Hall R.E."/>
            <person name="Hammond S."/>
            <person name="Harley J.L."/>
            <person name="Harrison E.S.I."/>
            <person name="Hart E.A."/>
            <person name="Heath P.D."/>
            <person name="Henderson C.D."/>
            <person name="Hopkins B.L."/>
            <person name="Howard P.J."/>
            <person name="Howden P.J."/>
            <person name="Huckle E."/>
            <person name="Johnson C."/>
            <person name="Johnson D."/>
            <person name="Joy A.A."/>
            <person name="Kay M."/>
            <person name="Keenan S."/>
            <person name="Kershaw J.K."/>
            <person name="Kimberley A.M."/>
            <person name="King A."/>
            <person name="Knights A."/>
            <person name="Laird G.K."/>
            <person name="Langford C."/>
            <person name="Lawlor S."/>
            <person name="Leongamornlert D.A."/>
            <person name="Leversha M."/>
            <person name="Lloyd C."/>
            <person name="Lloyd D.M."/>
            <person name="Lovell J."/>
            <person name="Martin S."/>
            <person name="Mashreghi-Mohammadi M."/>
            <person name="Matthews L."/>
            <person name="McLaren S."/>
            <person name="McLay K.E."/>
            <person name="McMurray A."/>
            <person name="Milne S."/>
            <person name="Nickerson T."/>
            <person name="Nisbett J."/>
            <person name="Nordsiek G."/>
            <person name="Pearce A.V."/>
            <person name="Peck A.I."/>
            <person name="Porter K.M."/>
            <person name="Pandian R."/>
            <person name="Pelan S."/>
            <person name="Phillimore B."/>
            <person name="Povey S."/>
            <person name="Ramsey Y."/>
            <person name="Rand V."/>
            <person name="Scharfe M."/>
            <person name="Sehra H.K."/>
            <person name="Shownkeen R."/>
            <person name="Sims S.K."/>
            <person name="Skuce C.D."/>
            <person name="Smith M."/>
            <person name="Steward C.A."/>
            <person name="Swarbreck D."/>
            <person name="Sycamore N."/>
            <person name="Tester J."/>
            <person name="Thorpe A."/>
            <person name="Tracey A."/>
            <person name="Tromans A."/>
            <person name="Thomas D.W."/>
            <person name="Wall M."/>
            <person name="Wallis J.M."/>
            <person name="West A.P."/>
            <person name="Whitehead S.L."/>
            <person name="Willey D.L."/>
            <person name="Williams S.A."/>
            <person name="Wilming L."/>
            <person name="Wray P.W."/>
            <person name="Young L."/>
            <person name="Ashurst J.L."/>
            <person name="Coulson A."/>
            <person name="Blocker H."/>
            <person name="Durbin R.M."/>
            <person name="Sulston J.E."/>
            <person name="Hubbard T."/>
            <person name="Jackson M.J."/>
            <person name="Bentley D.R."/>
            <person name="Beck S."/>
            <person name="Rogers J."/>
            <person name="Dunham I."/>
        </authorList>
    </citation>
    <scope>NUCLEOTIDE SEQUENCE [LARGE SCALE GENOMIC DNA]</scope>
</reference>
<reference key="9">
    <citation type="submission" date="2005-09" db="EMBL/GenBank/DDBJ databases">
        <authorList>
            <person name="Mural R.J."/>
            <person name="Istrail S."/>
            <person name="Sutton G.G."/>
            <person name="Florea L."/>
            <person name="Halpern A.L."/>
            <person name="Mobarry C.M."/>
            <person name="Lippert R."/>
            <person name="Walenz B."/>
            <person name="Shatkay H."/>
            <person name="Dew I."/>
            <person name="Miller J.R."/>
            <person name="Flanigan M.J."/>
            <person name="Edwards N.J."/>
            <person name="Bolanos R."/>
            <person name="Fasulo D."/>
            <person name="Halldorsson B.V."/>
            <person name="Hannenhalli S."/>
            <person name="Turner R."/>
            <person name="Yooseph S."/>
            <person name="Lu F."/>
            <person name="Nusskern D.R."/>
            <person name="Shue B.C."/>
            <person name="Zheng X.H."/>
            <person name="Zhong F."/>
            <person name="Delcher A.L."/>
            <person name="Huson D.H."/>
            <person name="Kravitz S.A."/>
            <person name="Mouchard L."/>
            <person name="Reinert K."/>
            <person name="Remington K.A."/>
            <person name="Clark A.G."/>
            <person name="Waterman M.S."/>
            <person name="Eichler E.E."/>
            <person name="Adams M.D."/>
            <person name="Hunkapiller M.W."/>
            <person name="Myers E.W."/>
            <person name="Venter J.C."/>
        </authorList>
    </citation>
    <scope>NUCLEOTIDE SEQUENCE [LARGE SCALE GENOMIC DNA]</scope>
</reference>
<reference key="10">
    <citation type="journal article" date="1986" name="Biochem. Biophys. Res. Commun.">
        <title>Isolation of a cDNA coding for human galactosyltransferase.</title>
        <authorList>
            <person name="Appert H.E."/>
            <person name="Rutherford T.J."/>
            <person name="Tarr G.E."/>
            <person name="Wiest J.S."/>
            <person name="Thomford N.R."/>
            <person name="McCorquodale D.J."/>
        </authorList>
    </citation>
    <scope>NUCLEOTIDE SEQUENCE [MRNA] OF 138-398</scope>
    <scope>PARTIAL PROTEIN SEQUENCE</scope>
</reference>
<reference key="11">
    <citation type="journal article" date="1986" name="Biochem. Biophys. Res. Commun.">
        <title>Isolation of galactosyltransferase from human milk and the determination of its N-terminal amino acid sequence.</title>
        <authorList>
            <person name="Appert H.E."/>
            <person name="Rutherford T.J."/>
            <person name="Tarr G.E."/>
            <person name="Thomford N.R."/>
            <person name="McCorquodale D.J."/>
        </authorList>
    </citation>
    <scope>PROTEIN SEQUENCE OF 78-94</scope>
</reference>
<reference key="12">
    <citation type="journal article" date="1990" name="EMBO J.">
        <title>Analysis of the substrate binding sites of human galactosyltransferase by protein engineering.</title>
        <authorList>
            <person name="Aoki D."/>
            <person name="Appert H.E."/>
            <person name="Johnson D."/>
            <person name="Wong S.S."/>
            <person name="Fukuda M.N."/>
        </authorList>
    </citation>
    <scope>PROTEIN SEQUENCE OF 274-326</scope>
    <scope>CATALYTIC ACTIVITY</scope>
    <scope>FUNCTION</scope>
    <scope>MUTAGENESIS OF TYR-282; TYR-285; TYR-307; TRP-308 AND TRP-310</scope>
</reference>
<reference key="13">
    <citation type="journal article" date="1991" name="J. Biol. Chem.">
        <title>Evidence for a molecular distinction between Golgi and cell surface forms of beta 1,4-galactosyltransferase.</title>
        <authorList>
            <person name="Lopez L.C."/>
            <person name="Youakim A."/>
            <person name="Evans S.C."/>
            <person name="Shur B.D."/>
        </authorList>
    </citation>
    <scope>ALTERNATIVE INITIATION</scope>
    <scope>SUBCELLULAR LOCATION</scope>
</reference>
<reference key="14">
    <citation type="journal article" date="1995" name="J. Biol. Chem.">
        <title>Golgi retention mechanism of beta-1,4-galactosyltransferase. Membrane-spanning domain-dependent homodimerization and association with alpha- and beta-tubulins.</title>
        <authorList>
            <person name="Yamaguchi N."/>
            <person name="Fukuda M.N."/>
        </authorList>
    </citation>
    <scope>SUBUNIT</scope>
</reference>
<reference key="15">
    <citation type="journal article" date="1999" name="Biochim. Biophys. Acta">
        <title>Identification and characterization of large galactosyltransferase gene families: galactosyltransferases for all functions.</title>
        <authorList>
            <person name="Amado M."/>
            <person name="Almeida R."/>
            <person name="Schwientek T."/>
            <person name="Clausen H."/>
        </authorList>
    </citation>
    <scope>REVIEW</scope>
</reference>
<reference key="16">
    <citation type="journal article" date="2002" name="J. Clin. Invest.">
        <title>Deficiency of UDP-galactose:N-acetylglucosamine beta-1,4-galactosyltransferase I causes the congenital disorder of glycosylation type IId.</title>
        <authorList>
            <person name="Hansske B."/>
            <person name="Thiel C."/>
            <person name="Luebke T."/>
            <person name="Hasilik M."/>
            <person name="Hoening S."/>
            <person name="Peters V."/>
            <person name="Heidemann P.H."/>
            <person name="Hoffmann G.F."/>
            <person name="Berger E.G."/>
            <person name="von Figura K."/>
            <person name="Koerner C."/>
        </authorList>
    </citation>
    <scope>INVOLVEMENT IN CDG2D</scope>
</reference>
<reference key="17">
    <citation type="journal article" date="2010" name="J. Biol. Chem.">
        <title>Golgi N-glycosyltransferases form both homo- and heterodimeric enzyme complexes in live cells.</title>
        <authorList>
            <person name="Hassinen A."/>
            <person name="Rivinoja A."/>
            <person name="Kauppila A."/>
            <person name="Kellokumpu S."/>
        </authorList>
    </citation>
    <scope>SUBCELLULAR LOCATION</scope>
</reference>
<reference key="18">
    <citation type="journal article" date="2010" name="Sci. Signal.">
        <title>Quantitative phosphoproteomics reveals widespread full phosphorylation site occupancy during mitosis.</title>
        <authorList>
            <person name="Olsen J.V."/>
            <person name="Vermeulen M."/>
            <person name="Santamaria A."/>
            <person name="Kumar C."/>
            <person name="Miller M.L."/>
            <person name="Jensen L.J."/>
            <person name="Gnad F."/>
            <person name="Cox J."/>
            <person name="Jensen T.S."/>
            <person name="Nigg E.A."/>
            <person name="Brunak S."/>
            <person name="Mann M."/>
        </authorList>
    </citation>
    <scope>IDENTIFICATION BY MASS SPECTROMETRY [LARGE SCALE ANALYSIS]</scope>
    <source>
        <tissue>Cervix carcinoma</tissue>
    </source>
</reference>
<reference key="19">
    <citation type="journal article" date="2014" name="J. Proteomics">
        <title>An enzyme assisted RP-RPLC approach for in-depth analysis of human liver phosphoproteome.</title>
        <authorList>
            <person name="Bian Y."/>
            <person name="Song C."/>
            <person name="Cheng K."/>
            <person name="Dong M."/>
            <person name="Wang F."/>
            <person name="Huang J."/>
            <person name="Sun D."/>
            <person name="Wang L."/>
            <person name="Ye M."/>
            <person name="Zou H."/>
        </authorList>
    </citation>
    <scope>IDENTIFICATION BY MASS SPECTROMETRY [LARGE SCALE ANALYSIS]</scope>
    <source>
        <tissue>Liver</tissue>
    </source>
</reference>
<reference key="20">
    <citation type="journal article" date="2021" name="Science">
        <title>Genetic and functional evidence links a missense variant in B4GALT1 to lower LDL and fibrinogen.</title>
        <authorList>
            <consortium name="Regeneron Genetics Center Collaboration"/>
            <person name="Montasser M.E."/>
            <person name="Van Hout C.V."/>
            <person name="Miloscio L."/>
            <person name="Howard A.D."/>
            <person name="Rosenberg A."/>
            <person name="Callaway M."/>
            <person name="Shen B."/>
            <person name="Li N."/>
            <person name="Locke A.E."/>
            <person name="Verweij N."/>
            <person name="De T."/>
            <person name="Ferreira M.A."/>
            <person name="Lotta L.A."/>
            <person name="Baras A."/>
            <person name="Daly T.J."/>
            <person name="Hartford S.A."/>
            <person name="Lin W."/>
            <person name="Mao Y."/>
            <person name="Ye B."/>
            <person name="White D."/>
            <person name="Gong G."/>
            <person name="Perry J.A."/>
            <person name="Ryan K.A."/>
            <person name="Fang Q."/>
            <person name="Tzoneva G."/>
            <person name="Pefanis E."/>
            <person name="Hunt C."/>
            <person name="Tang Y."/>
            <person name="Lee L."/>
            <person name="Sztalryd-Woodle C."/>
            <person name="Mitchell B.D."/>
            <person name="Healy M."/>
            <person name="Streeten E.A."/>
            <person name="Taylor S.I."/>
            <person name="O'Connell J.R."/>
            <person name="Economides A.N."/>
            <person name="Della Gatta G."/>
            <person name="Shuldiner A.R."/>
        </authorList>
    </citation>
    <scope>INVOLVEMENT IN CLDLFIB</scope>
    <scope>VARIANT SER-352</scope>
    <scope>CHARACTERIZATION OF VARIANT SER-352</scope>
</reference>
<reference key="21">
    <citation type="journal article" date="2005" name="J. Mol. Biol.">
        <title>Oligosaccharide preferences of beta1,4-galactosyltransferase-I: crystal structures of Met340His mutant of human beta1,4-galactosyltransferase-I with a pentasaccharide and trisaccharides of the N-glycan moiety.</title>
        <authorList>
            <person name="Ramasamy V."/>
            <person name="Ramakrishnan B."/>
            <person name="Boeggeman E."/>
            <person name="Ratner D.M."/>
            <person name="Seeberger P.H."/>
            <person name="Qasba P.K."/>
        </authorList>
    </citation>
    <scope>X-RAY CRYSTALLOGRAPHY (1.9 ANGSTROMS) OF 126-397 OF MUTANT HIS-340 IN COMPLEX WITH MANGANESE IONS AND N-ACETYL-D-GLUCOSAMINE</scope>
    <scope>CATALYTIC ACTIVITY</scope>
    <scope>FUNCTION</scope>
    <scope>COFACTOR</scope>
    <scope>MUTAGENESIS OF MET-340</scope>
    <scope>DISULFIDE BONDS</scope>
</reference>
<reference key="22">
    <citation type="journal article" date="2006" name="J. Mol. Biol.">
        <title>Structural snapshots of beta-1,4-galactosyltransferase-I along the kinetic pathway.</title>
        <authorList>
            <person name="Ramakrishnan B."/>
            <person name="Ramasamy V."/>
            <person name="Qasba P.K."/>
        </authorList>
    </citation>
    <scope>X-RAY CRYSTALLOGRAPHY (1.7 ANGSTROMS) OF 126-397 OF MUTANT HIS-340 IN COMPLEX WITH MANGANESE IONS AND UDP</scope>
    <scope>COFACTOR</scope>
    <scope>DISULFIDE BONDS</scope>
</reference>
<reference key="23">
    <citation type="journal article" date="2009" name="J. Biol. Chem.">
        <title>Deoxygenated disaccharide analogs as specific inhibitors of beta1-4-galactosyltransferase 1 and selectin-mediated tumor metastasis.</title>
        <authorList>
            <person name="Brown J.R."/>
            <person name="Yang F."/>
            <person name="Sinha A."/>
            <person name="Ramakrishnan B."/>
            <person name="Tor Y."/>
            <person name="Qasba P.K."/>
            <person name="Esko J.D."/>
        </authorList>
    </citation>
    <scope>X-RAY CRYSTALLOGRAPHY (2.20 ANGSTROMS) OF 126-398 IN COMPLEX WITH MANGANESE IONS AND N-ACETYL-D-GLUCOSAMINE</scope>
    <scope>COFACTOR</scope>
</reference>
<reference key="24">
    <citation type="journal article" date="2019" name="Clin. Genet.">
        <title>Clinical and molecular diagnosis of non-phosphomannomutase 2 N-linked congenital disorders of glycosylation in Spain.</title>
        <authorList>
            <person name="Medrano C."/>
            <person name="Vega A."/>
            <person name="Navarrete R."/>
            <person name="Ecay M.J."/>
            <person name="Calvo R."/>
            <person name="Pascual S.I."/>
            <person name="Ruiz-Pons M."/>
            <person name="Toledo L."/>
            <person name="Garcia-Jimenez I."/>
            <person name="Arroyo I."/>
            <person name="Campo A."/>
            <person name="Couce M.L."/>
            <person name="Domingo-Jimenez M.R."/>
            <person name="Garcia-Silva M.T."/>
            <person name="Gonzalez-Gutierrez-Solana L."/>
            <person name="Hierro L."/>
            <person name="Martin-Hernandez E."/>
            <person name="Martinez-Pardo M."/>
            <person name="Roldan S."/>
            <person name="Tomas M."/>
            <person name="Cabrera J.C."/>
            <person name="Martinez-Bugallo F."/>
            <person name="Martin-Viota L."/>
            <person name="Vitoria-Minana I."/>
            <person name="Lefeber D.J."/>
            <person name="Giros M.L."/>
            <person name="Serrano Gimare M."/>
            <person name="Ugarte M."/>
            <person name="Perez B."/>
            <person name="Perez-Cerda C."/>
        </authorList>
    </citation>
    <scope>VARIANT CDG2D 193-TYR--SER-398 DEL</scope>
</reference>
<reference key="25">
    <citation type="journal article" date="2020" name="Clin. Genet.">
        <title>B4GALT1-congenital disorders of glycosylation: Expansion of the phenotypic and molecular spectrum and review of the literature.</title>
        <authorList>
            <person name="Staretz-Chacham O."/>
            <person name="Noyman I."/>
            <person name="Wormser O."/>
            <person name="Abu Quider A."/>
            <person name="Hazan G."/>
            <person name="Morag I."/>
            <person name="Hadar N."/>
            <person name="Raymond K."/>
            <person name="Birk O.S."/>
            <person name="Ferreira C.R."/>
            <person name="Koifman A."/>
        </authorList>
    </citation>
    <scope>VARIANT CDG2D TRP-21</scope>
</reference>
<comment type="function">
    <molecule>Beta-1,4-galactosyltransferase 1</molecule>
    <text evidence="15">The Golgi complex form catalyzes the production of lactose in the lactating mammary gland and could also be responsible for the synthesis of complex-type N-linked oligosaccharides in many glycoproteins as well as the carbohydrate moieties of glycolipids.</text>
</comment>
<comment type="function">
    <molecule>Processed beta-1,4-galactosyltransferase 1</molecule>
    <text evidence="7">The cell surface form functions as a recognition molecule during a variety of cell to cell and cell to matrix interactions, as those occurring during development and egg fertilization, by binding to specific oligosaccharide ligands on opposing cells or in the extracellular matrix.</text>
</comment>
<comment type="catalytic activity">
    <reaction evidence="7">
        <text>D-glucose + UDP-alpha-D-galactose = lactose + UDP + H(+)</text>
        <dbReference type="Rhea" id="RHEA:12404"/>
        <dbReference type="ChEBI" id="CHEBI:4167"/>
        <dbReference type="ChEBI" id="CHEBI:15378"/>
        <dbReference type="ChEBI" id="CHEBI:17716"/>
        <dbReference type="ChEBI" id="CHEBI:58223"/>
        <dbReference type="ChEBI" id="CHEBI:66914"/>
        <dbReference type="EC" id="2.4.1.22"/>
    </reaction>
    <physiologicalReaction direction="left-to-right" evidence="7">
        <dbReference type="Rhea" id="RHEA:12405"/>
    </physiologicalReaction>
</comment>
<comment type="catalytic activity">
    <reaction evidence="7">
        <text>an N-acetyl-beta-D-glucosaminyl derivative + UDP-alpha-D-galactose = a beta-D-galactosyl-(1-&gt;4)-N-acetyl-beta-D-glucosaminyl derivative + UDP + H(+)</text>
        <dbReference type="Rhea" id="RHEA:22932"/>
        <dbReference type="ChEBI" id="CHEBI:15378"/>
        <dbReference type="ChEBI" id="CHEBI:58223"/>
        <dbReference type="ChEBI" id="CHEBI:61631"/>
        <dbReference type="ChEBI" id="CHEBI:66914"/>
        <dbReference type="ChEBI" id="CHEBI:133507"/>
        <dbReference type="EC" id="2.4.1.38"/>
    </reaction>
    <physiologicalReaction direction="left-to-right" evidence="7">
        <dbReference type="Rhea" id="RHEA:22933"/>
    </physiologicalReaction>
</comment>
<comment type="catalytic activity">
    <reaction evidence="7">
        <text>N-acetyl-D-glucosamine + UDP-alpha-D-galactose = beta-D-galactosyl-(1-&gt;4)-N-acetyl-D-glucosamine + UDP + H(+)</text>
        <dbReference type="Rhea" id="RHEA:17745"/>
        <dbReference type="ChEBI" id="CHEBI:15378"/>
        <dbReference type="ChEBI" id="CHEBI:58223"/>
        <dbReference type="ChEBI" id="CHEBI:60152"/>
        <dbReference type="ChEBI" id="CHEBI:66914"/>
        <dbReference type="ChEBI" id="CHEBI:506227"/>
        <dbReference type="EC" id="2.4.1.90"/>
    </reaction>
    <physiologicalReaction direction="left-to-right" evidence="7">
        <dbReference type="Rhea" id="RHEA:17746"/>
    </physiologicalReaction>
</comment>
<comment type="catalytic activity">
    <reaction evidence="2">
        <text>a beta-D-GlcNAc-(1-&gt;3)-beta-D-Gal-(1-&gt;4)-beta-D-Glc-(1&lt;-&gt;1)-Cer(d18:1(4E)) + UDP-alpha-D-galactose = a neolactoside nLc4Cer(d18:1(4E)) + UDP + H(+)</text>
        <dbReference type="Rhea" id="RHEA:31499"/>
        <dbReference type="ChEBI" id="CHEBI:15378"/>
        <dbReference type="ChEBI" id="CHEBI:17006"/>
        <dbReference type="ChEBI" id="CHEBI:17103"/>
        <dbReference type="ChEBI" id="CHEBI:58223"/>
        <dbReference type="ChEBI" id="CHEBI:66914"/>
        <dbReference type="EC" id="2.4.1.275"/>
    </reaction>
    <physiologicalReaction direction="left-to-right" evidence="2">
        <dbReference type="Rhea" id="RHEA:31500"/>
    </physiologicalReaction>
</comment>
<comment type="catalytic activity">
    <reaction evidence="2">
        <text>a beta-D-glucosylceramide + UDP-alpha-D-galactose = a beta-D-galactosyl-(1-&gt;4)-beta-D-glucosyl-(1&lt;-&gt;1)-ceramide + UDP + H(+)</text>
        <dbReference type="Rhea" id="RHEA:62552"/>
        <dbReference type="ChEBI" id="CHEBI:15378"/>
        <dbReference type="ChEBI" id="CHEBI:58223"/>
        <dbReference type="ChEBI" id="CHEBI:66914"/>
        <dbReference type="ChEBI" id="CHEBI:79208"/>
        <dbReference type="ChEBI" id="CHEBI:83264"/>
    </reaction>
    <physiologicalReaction direction="left-to-right" evidence="2">
        <dbReference type="Rhea" id="RHEA:62553"/>
    </physiologicalReaction>
</comment>
<comment type="catalytic activity">
    <reaction evidence="2">
        <text>a neolactoside IV(3)-beta-GlcNAc-nLc4Cer + UDP-alpha-D-galactose = a neolactoside nLc6Cer + UDP + H(+)</text>
        <dbReference type="Rhea" id="RHEA:62548"/>
        <dbReference type="ChEBI" id="CHEBI:15378"/>
        <dbReference type="ChEBI" id="CHEBI:58223"/>
        <dbReference type="ChEBI" id="CHEBI:66914"/>
        <dbReference type="ChEBI" id="CHEBI:90357"/>
        <dbReference type="ChEBI" id="CHEBI:144378"/>
    </reaction>
    <physiologicalReaction direction="left-to-right" evidence="2">
        <dbReference type="Rhea" id="RHEA:62549"/>
    </physiologicalReaction>
</comment>
<comment type="cofactor">
    <cofactor evidence="7 8 10">
        <name>Mn(2+)</name>
        <dbReference type="ChEBI" id="CHEBI:29035"/>
    </cofactor>
</comment>
<comment type="pathway">
    <text evidence="7">Protein modification; protein glycosylation.</text>
</comment>
<comment type="subunit">
    <text evidence="3 7 8 10 16">Homodimer; and heterodimer with alpha-lactalbumin to form lactose synthase. Interacts (via N-terminal cytoplasmic domain) with UBE2Q1 (via N-terminus); the interaction is direct (By similarity).</text>
</comment>
<comment type="subcellular location">
    <molecule>Isoform Long</molecule>
    <subcellularLocation>
        <location evidence="9 11">Golgi apparatus</location>
        <location evidence="9 11">Golgi stack membrane</location>
        <topology>Single-pass type II membrane protein</topology>
    </subcellularLocation>
    <subcellularLocation>
        <location evidence="9">Cell membrane</location>
        <topology>Single-pass type II membrane protein</topology>
    </subcellularLocation>
    <subcellularLocation>
        <location evidence="9">Cell surface</location>
    </subcellularLocation>
    <subcellularLocation>
        <location evidence="3">Cell projection</location>
        <location evidence="3">Filopodium</location>
    </subcellularLocation>
    <text evidence="3 9">Found in trans cisternae of Golgi but is mainly localized at the plasma membrane (PubMed:1714903). B4GALT1 cell surface expression is regulated by UBE2Q1 (By similarity).</text>
</comment>
<comment type="subcellular location">
    <molecule>Isoform Short</molecule>
    <subcellularLocation>
        <location evidence="9">Golgi apparatus</location>
        <location evidence="9">Golgi stack membrane</location>
        <topology>Single-pass type II membrane protein</topology>
    </subcellularLocation>
    <text evidence="9">Found in trans cisternae of Golgi.</text>
</comment>
<comment type="subcellular location">
    <molecule>Processed beta-1,4-galactosyltransferase 1</molecule>
    <subcellularLocation>
        <location evidence="17">Secreted</location>
    </subcellularLocation>
    <text evidence="17">Soluble form found in body fluids.</text>
</comment>
<comment type="alternative products">
    <event type="alternative initiation"/>
    <isoform>
        <id>P15291-1</id>
        <name>Long</name>
        <name>Cell surface</name>
        <sequence type="displayed"/>
    </isoform>
    <isoform>
        <id>P15291-2</id>
        <name>Short</name>
        <name>Golgi complex</name>
        <sequence type="described" ref="VSP_018802"/>
    </isoform>
</comment>
<comment type="tissue specificity">
    <text>Ubiquitously expressed, but at very low levels in fetal and adult brain.</text>
</comment>
<comment type="PTM">
    <text>The soluble form derives from the membrane forms by proteolytic processing.</text>
</comment>
<comment type="disease" evidence="6 13 14">
    <disease id="DI-00349">
        <name>Congenital disorder of glycosylation 2D</name>
        <acronym>CDG2D</acronym>
        <description>A multisystem disorder caused by a defect in glycoprotein biosynthesis and characterized by under-glycosylated serum glycoproteins. Congenital disorders of glycosylation result in a wide variety of clinical features, such as defects in the nervous system development, psychomotor retardation, dysmorphic features, hypotonia, coagulation disorders, and immunodeficiency. The broad spectrum of features reflects the critical role of N-glycoproteins during embryonic development, differentiation, and maintenance of cell functions.</description>
        <dbReference type="MIM" id="607091"/>
    </disease>
    <text>The disease is caused by variants affecting the gene represented in this entry.</text>
</comment>
<comment type="disease" evidence="15">
    <disease id="DI-06676">
        <name>Combined low LDL and fibrinogen</name>
        <acronym>CLDLFIB</acronym>
        <description>An autosomal recessive condition characterized by low plasma LDL-cholesterol and fibrinogen levels, and associated with a decreased risk of coronary artery disease.</description>
        <dbReference type="MIM" id="620364"/>
    </disease>
    <text>Disease susceptibility may be associated with variants affecting the gene represented in this entry.</text>
</comment>
<comment type="similarity">
    <text evidence="18">Belongs to the glycosyltransferase 7 family.</text>
</comment>
<comment type="online information" name="Functional Glycomics Gateway - GTase">
    <link uri="http://www.functionalglycomics.org/glycomics/molecule/jsp/glycoEnzyme/viewGlycoEnzyme.jsp?gbpId=gt_hum_436"/>
    <text>Beta-1,4-galactosyltransferase 1</text>
</comment>